<comment type="catalytic activity">
    <reaction evidence="1">
        <text>tRNA(Arg) + L-arginine + ATP = L-arginyl-tRNA(Arg) + AMP + diphosphate</text>
        <dbReference type="Rhea" id="RHEA:20301"/>
        <dbReference type="Rhea" id="RHEA-COMP:9658"/>
        <dbReference type="Rhea" id="RHEA-COMP:9673"/>
        <dbReference type="ChEBI" id="CHEBI:30616"/>
        <dbReference type="ChEBI" id="CHEBI:32682"/>
        <dbReference type="ChEBI" id="CHEBI:33019"/>
        <dbReference type="ChEBI" id="CHEBI:78442"/>
        <dbReference type="ChEBI" id="CHEBI:78513"/>
        <dbReference type="ChEBI" id="CHEBI:456215"/>
        <dbReference type="EC" id="6.1.1.19"/>
    </reaction>
</comment>
<comment type="subcellular location">
    <subcellularLocation>
        <location evidence="1">Cytoplasm</location>
    </subcellularLocation>
</comment>
<comment type="similarity">
    <text evidence="1">Belongs to the class-I aminoacyl-tRNA synthetase family.</text>
</comment>
<dbReference type="EC" id="6.1.1.19" evidence="1"/>
<dbReference type="EMBL" id="CP000678">
    <property type="protein sequence ID" value="ABQ87436.1"/>
    <property type="molecule type" value="Genomic_DNA"/>
</dbReference>
<dbReference type="RefSeq" id="WP_011954371.1">
    <property type="nucleotide sequence ID" value="NZ_CP117965.1"/>
</dbReference>
<dbReference type="SMR" id="A5UMK8"/>
<dbReference type="STRING" id="420247.Msm_1231"/>
<dbReference type="EnsemblBacteria" id="ABQ87436">
    <property type="protein sequence ID" value="ABQ87436"/>
    <property type="gene ID" value="Msm_1231"/>
</dbReference>
<dbReference type="GeneID" id="78817884"/>
<dbReference type="KEGG" id="msi:Msm_1231"/>
<dbReference type="PATRIC" id="fig|420247.28.peg.1230"/>
<dbReference type="eggNOG" id="arCOG00487">
    <property type="taxonomic scope" value="Archaea"/>
</dbReference>
<dbReference type="HOGENOM" id="CLU_006406_6_1_2"/>
<dbReference type="Proteomes" id="UP000001992">
    <property type="component" value="Chromosome"/>
</dbReference>
<dbReference type="GO" id="GO:0005737">
    <property type="term" value="C:cytoplasm"/>
    <property type="evidence" value="ECO:0007669"/>
    <property type="project" value="UniProtKB-SubCell"/>
</dbReference>
<dbReference type="GO" id="GO:0004814">
    <property type="term" value="F:arginine-tRNA ligase activity"/>
    <property type="evidence" value="ECO:0007669"/>
    <property type="project" value="UniProtKB-UniRule"/>
</dbReference>
<dbReference type="GO" id="GO:0005524">
    <property type="term" value="F:ATP binding"/>
    <property type="evidence" value="ECO:0007669"/>
    <property type="project" value="UniProtKB-UniRule"/>
</dbReference>
<dbReference type="GO" id="GO:0006420">
    <property type="term" value="P:arginyl-tRNA aminoacylation"/>
    <property type="evidence" value="ECO:0007669"/>
    <property type="project" value="UniProtKB-UniRule"/>
</dbReference>
<dbReference type="CDD" id="cd00671">
    <property type="entry name" value="ArgRS_core"/>
    <property type="match status" value="1"/>
</dbReference>
<dbReference type="Gene3D" id="3.30.1360.70">
    <property type="entry name" value="Arginyl tRNA synthetase N-terminal domain"/>
    <property type="match status" value="1"/>
</dbReference>
<dbReference type="Gene3D" id="3.40.50.620">
    <property type="entry name" value="HUPs"/>
    <property type="match status" value="1"/>
</dbReference>
<dbReference type="Gene3D" id="1.10.730.10">
    <property type="entry name" value="Isoleucyl-tRNA Synthetase, Domain 1"/>
    <property type="match status" value="1"/>
</dbReference>
<dbReference type="HAMAP" id="MF_00123">
    <property type="entry name" value="Arg_tRNA_synth"/>
    <property type="match status" value="1"/>
</dbReference>
<dbReference type="InterPro" id="IPR001412">
    <property type="entry name" value="aa-tRNA-synth_I_CS"/>
</dbReference>
<dbReference type="InterPro" id="IPR001278">
    <property type="entry name" value="Arg-tRNA-ligase"/>
</dbReference>
<dbReference type="InterPro" id="IPR005148">
    <property type="entry name" value="Arg-tRNA-synth_N"/>
</dbReference>
<dbReference type="InterPro" id="IPR036695">
    <property type="entry name" value="Arg-tRNA-synth_N_sf"/>
</dbReference>
<dbReference type="InterPro" id="IPR035684">
    <property type="entry name" value="ArgRS_core"/>
</dbReference>
<dbReference type="InterPro" id="IPR008909">
    <property type="entry name" value="DALR_anticod-bd"/>
</dbReference>
<dbReference type="InterPro" id="IPR014729">
    <property type="entry name" value="Rossmann-like_a/b/a_fold"/>
</dbReference>
<dbReference type="InterPro" id="IPR009080">
    <property type="entry name" value="tRNAsynth_Ia_anticodon-bd"/>
</dbReference>
<dbReference type="NCBIfam" id="TIGR00456">
    <property type="entry name" value="argS"/>
    <property type="match status" value="1"/>
</dbReference>
<dbReference type="PANTHER" id="PTHR11956:SF5">
    <property type="entry name" value="ARGININE--TRNA LIGASE, CYTOPLASMIC"/>
    <property type="match status" value="1"/>
</dbReference>
<dbReference type="PANTHER" id="PTHR11956">
    <property type="entry name" value="ARGINYL-TRNA SYNTHETASE"/>
    <property type="match status" value="1"/>
</dbReference>
<dbReference type="Pfam" id="PF03485">
    <property type="entry name" value="Arg_tRNA_synt_N"/>
    <property type="match status" value="1"/>
</dbReference>
<dbReference type="Pfam" id="PF05746">
    <property type="entry name" value="DALR_1"/>
    <property type="match status" value="1"/>
</dbReference>
<dbReference type="Pfam" id="PF00750">
    <property type="entry name" value="tRNA-synt_1d"/>
    <property type="match status" value="1"/>
</dbReference>
<dbReference type="PRINTS" id="PR01038">
    <property type="entry name" value="TRNASYNTHARG"/>
</dbReference>
<dbReference type="SMART" id="SM01016">
    <property type="entry name" value="Arg_tRNA_synt_N"/>
    <property type="match status" value="1"/>
</dbReference>
<dbReference type="SMART" id="SM00836">
    <property type="entry name" value="DALR_1"/>
    <property type="match status" value="1"/>
</dbReference>
<dbReference type="SUPFAM" id="SSF47323">
    <property type="entry name" value="Anticodon-binding domain of a subclass of class I aminoacyl-tRNA synthetases"/>
    <property type="match status" value="1"/>
</dbReference>
<dbReference type="SUPFAM" id="SSF55190">
    <property type="entry name" value="Arginyl-tRNA synthetase (ArgRS), N-terminal 'additional' domain"/>
    <property type="match status" value="1"/>
</dbReference>
<dbReference type="SUPFAM" id="SSF52374">
    <property type="entry name" value="Nucleotidylyl transferase"/>
    <property type="match status" value="1"/>
</dbReference>
<dbReference type="PROSITE" id="PS00178">
    <property type="entry name" value="AA_TRNA_LIGASE_I"/>
    <property type="match status" value="1"/>
</dbReference>
<name>SYR_METS3</name>
<sequence length="575" mass="65338">MYFEIEKQAIDAISDALDKFEVDNTLENFQVEDEKNFRLEFPPNPDMGDLASTIAFSLAKKLRKAPNLIASEIVEKLEIPEIFEKVEAIGPYVNFFIDYSNFSKKLLEYVGKDYGHLPKADEKIILEHTSANPNGPLHIGHVRNSIFGDSLNRLLKVAGREVETQYYVNDMGRQIAIIVFGITELGLKIEDQEGDKIDHKIGRLYFKANQKLNEDESLVSHVDNLIERYEGGAEPELNKIFEEVVESCLLGIKETLHRININHDDFVWEGQFVRSGEVDDMIKYFDHEGFVSYGDVTYIDLTCFQIEKEFVLRRSDGTSLYSTRDLAYHRYKATQGDVVLDILGSDHKLAAQQINVIFKEILREIPPEVIFYEFITLPSGSMSTRKGVFVSVDELVDEAVKRAADEIKSRNPDLTDEEIKPMAEDIGVGAIRFFIAKLSPEKHLTFKWDEALSFERGCASIQYAHARACKLLKKSGKDVSSLAVSDDWVPNENEKDLIRTIAKFPQVIEDCANKKRIHNITQYCQDLAGAFNKFYKAEQVIGSDVEDTRLVLVDRAKTTLKNALDILGVPAPQKM</sequence>
<feature type="chain" id="PRO_1000018065" description="Arginine--tRNA ligase">
    <location>
        <begin position="1"/>
        <end position="575"/>
    </location>
</feature>
<feature type="short sequence motif" description="'HIGH' region">
    <location>
        <begin position="131"/>
        <end position="141"/>
    </location>
</feature>
<reference key="1">
    <citation type="journal article" date="2007" name="Proc. Natl. Acad. Sci. U.S.A.">
        <title>Genomic and metabolic adaptations of Methanobrevibacter smithii to the human gut.</title>
        <authorList>
            <person name="Samuel B.S."/>
            <person name="Hansen E.E."/>
            <person name="Manchester J.K."/>
            <person name="Coutinho P.M."/>
            <person name="Henrissat B."/>
            <person name="Fulton R."/>
            <person name="Latreille P."/>
            <person name="Kim K."/>
            <person name="Wilson R.K."/>
            <person name="Gordon J.I."/>
        </authorList>
    </citation>
    <scope>NUCLEOTIDE SEQUENCE [LARGE SCALE GENOMIC DNA]</scope>
    <source>
        <strain>ATCC 35061 / DSM 861 / OCM 144 / PS</strain>
    </source>
</reference>
<accession>A5UMK8</accession>
<evidence type="ECO:0000255" key="1">
    <source>
        <dbReference type="HAMAP-Rule" id="MF_00123"/>
    </source>
</evidence>
<keyword id="KW-0030">Aminoacyl-tRNA synthetase</keyword>
<keyword id="KW-0067">ATP-binding</keyword>
<keyword id="KW-0963">Cytoplasm</keyword>
<keyword id="KW-0436">Ligase</keyword>
<keyword id="KW-0547">Nucleotide-binding</keyword>
<keyword id="KW-0648">Protein biosynthesis</keyword>
<gene>
    <name evidence="1" type="primary">argS</name>
    <name type="ordered locus">Msm_1231</name>
</gene>
<organism>
    <name type="scientific">Methanobrevibacter smithii (strain ATCC 35061 / DSM 861 / OCM 144 / PS)</name>
    <dbReference type="NCBI Taxonomy" id="420247"/>
    <lineage>
        <taxon>Archaea</taxon>
        <taxon>Methanobacteriati</taxon>
        <taxon>Methanobacteriota</taxon>
        <taxon>Methanomada group</taxon>
        <taxon>Methanobacteria</taxon>
        <taxon>Methanobacteriales</taxon>
        <taxon>Methanobacteriaceae</taxon>
        <taxon>Methanobrevibacter</taxon>
    </lineage>
</organism>
<proteinExistence type="inferred from homology"/>
<protein>
    <recommendedName>
        <fullName evidence="1">Arginine--tRNA ligase</fullName>
        <ecNumber evidence="1">6.1.1.19</ecNumber>
    </recommendedName>
    <alternativeName>
        <fullName evidence="1">Arginyl-tRNA synthetase</fullName>
        <shortName evidence="1">ArgRS</shortName>
    </alternativeName>
</protein>